<sequence>MTIDRTYPIFTVRWLAVHGLAVPTVSFLGSISAMQFIQR</sequence>
<proteinExistence type="inferred from homology"/>
<dbReference type="EMBL" id="DQ897681">
    <property type="protein sequence ID" value="ABI17362.1"/>
    <property type="molecule type" value="Genomic_DNA"/>
</dbReference>
<dbReference type="EMBL" id="DQ897681">
    <property type="protein sequence ID" value="ABI17276.1"/>
    <property type="molecule type" value="Genomic_DNA"/>
</dbReference>
<dbReference type="RefSeq" id="YP_784085.1">
    <property type="nucleotide sequence ID" value="NC_008454.1"/>
</dbReference>
<dbReference type="RefSeq" id="YP_784171.1">
    <property type="nucleotide sequence ID" value="NC_008454.1"/>
</dbReference>
<dbReference type="SMR" id="Q06FL0"/>
<dbReference type="GeneID" id="4362756"/>
<dbReference type="GeneID" id="4362943"/>
<dbReference type="GO" id="GO:0009535">
    <property type="term" value="C:chloroplast thylakoid membrane"/>
    <property type="evidence" value="ECO:0007669"/>
    <property type="project" value="UniProtKB-SubCell"/>
</dbReference>
<dbReference type="GO" id="GO:0009539">
    <property type="term" value="C:photosystem II reaction center"/>
    <property type="evidence" value="ECO:0007669"/>
    <property type="project" value="InterPro"/>
</dbReference>
<dbReference type="GO" id="GO:0009055">
    <property type="term" value="F:electron transfer activity"/>
    <property type="evidence" value="ECO:0007669"/>
    <property type="project" value="UniProtKB-UniRule"/>
</dbReference>
<dbReference type="GO" id="GO:0020037">
    <property type="term" value="F:heme binding"/>
    <property type="evidence" value="ECO:0007669"/>
    <property type="project" value="InterPro"/>
</dbReference>
<dbReference type="GO" id="GO:0005506">
    <property type="term" value="F:iron ion binding"/>
    <property type="evidence" value="ECO:0007669"/>
    <property type="project" value="UniProtKB-UniRule"/>
</dbReference>
<dbReference type="GO" id="GO:0009767">
    <property type="term" value="P:photosynthetic electron transport chain"/>
    <property type="evidence" value="ECO:0007669"/>
    <property type="project" value="InterPro"/>
</dbReference>
<dbReference type="HAMAP" id="MF_00643">
    <property type="entry name" value="PSII_PsbF"/>
    <property type="match status" value="1"/>
</dbReference>
<dbReference type="InterPro" id="IPR006241">
    <property type="entry name" value="PSII_cyt_b559_bsu"/>
</dbReference>
<dbReference type="InterPro" id="IPR006216">
    <property type="entry name" value="PSII_cyt_b559_CS"/>
</dbReference>
<dbReference type="InterPro" id="IPR013081">
    <property type="entry name" value="PSII_cyt_b559_N"/>
</dbReference>
<dbReference type="NCBIfam" id="TIGR01333">
    <property type="entry name" value="cyt_b559_beta"/>
    <property type="match status" value="1"/>
</dbReference>
<dbReference type="Pfam" id="PF00283">
    <property type="entry name" value="Cytochrom_B559"/>
    <property type="match status" value="1"/>
</dbReference>
<dbReference type="PIRSF" id="PIRSF000037">
    <property type="entry name" value="PsbF"/>
    <property type="match status" value="1"/>
</dbReference>
<dbReference type="SUPFAM" id="SSF161045">
    <property type="entry name" value="Cytochrome b559 subunits"/>
    <property type="match status" value="1"/>
</dbReference>
<dbReference type="PROSITE" id="PS00537">
    <property type="entry name" value="CYTOCHROME_B559"/>
    <property type="match status" value="1"/>
</dbReference>
<name>PSBF_PELHO</name>
<organism>
    <name type="scientific">Pelargonium hortorum</name>
    <name type="common">Common geranium</name>
    <name type="synonym">Pelargonium inquinans x Pelargonium zonale</name>
    <dbReference type="NCBI Taxonomy" id="4031"/>
    <lineage>
        <taxon>Eukaryota</taxon>
        <taxon>Viridiplantae</taxon>
        <taxon>Streptophyta</taxon>
        <taxon>Embryophyta</taxon>
        <taxon>Tracheophyta</taxon>
        <taxon>Spermatophyta</taxon>
        <taxon>Magnoliopsida</taxon>
        <taxon>eudicotyledons</taxon>
        <taxon>Gunneridae</taxon>
        <taxon>Pentapetalae</taxon>
        <taxon>rosids</taxon>
        <taxon>malvids</taxon>
        <taxon>Geraniales</taxon>
        <taxon>Geraniaceae</taxon>
        <taxon>Pelargonium</taxon>
    </lineage>
</organism>
<accession>Q06FL0</accession>
<keyword id="KW-0150">Chloroplast</keyword>
<keyword id="KW-0249">Electron transport</keyword>
<keyword id="KW-0349">Heme</keyword>
<keyword id="KW-0408">Iron</keyword>
<keyword id="KW-0472">Membrane</keyword>
<keyword id="KW-0479">Metal-binding</keyword>
<keyword id="KW-0602">Photosynthesis</keyword>
<keyword id="KW-0604">Photosystem II</keyword>
<keyword id="KW-0934">Plastid</keyword>
<keyword id="KW-0793">Thylakoid</keyword>
<keyword id="KW-0812">Transmembrane</keyword>
<keyword id="KW-1133">Transmembrane helix</keyword>
<keyword id="KW-0813">Transport</keyword>
<comment type="function">
    <text evidence="1">This b-type cytochrome is tightly associated with the reaction center of photosystem II (PSII). PSII is a light-driven water:plastoquinone oxidoreductase that uses light energy to abstract electrons from H(2)O, generating O(2) and a proton gradient subsequently used for ATP formation. It consists of a core antenna complex that captures photons, and an electron transfer chain that converts photonic excitation into a charge separation.</text>
</comment>
<comment type="cofactor">
    <cofactor evidence="1">
        <name>heme b</name>
        <dbReference type="ChEBI" id="CHEBI:60344"/>
    </cofactor>
    <text evidence="1">With its partner (PsbE) binds heme. PSII binds additional chlorophylls, carotenoids and specific lipids.</text>
</comment>
<comment type="subunit">
    <text evidence="1">Heterodimer of an alpha subunit and a beta subunit. PSII is composed of 1 copy each of membrane proteins PsbA, PsbB, PsbC, PsbD, PsbE, PsbF, PsbH, PsbI, PsbJ, PsbK, PsbL, PsbM, PsbT, PsbX, PsbY, PsbZ, Psb30/Ycf12, at least 3 peripheral proteins of the oxygen-evolving complex and a large number of cofactors. It forms dimeric complexes.</text>
</comment>
<comment type="subcellular location">
    <subcellularLocation>
        <location evidence="1">Plastid</location>
        <location evidence="1">Chloroplast thylakoid membrane</location>
        <topology evidence="1">Single-pass membrane protein</topology>
    </subcellularLocation>
</comment>
<comment type="similarity">
    <text evidence="1">Belongs to the PsbE/PsbF family.</text>
</comment>
<geneLocation type="chloroplast"/>
<feature type="chain" id="PRO_0000275736" description="Cytochrome b559 subunit beta">
    <location>
        <begin position="1"/>
        <end position="39"/>
    </location>
</feature>
<feature type="transmembrane region" description="Helical" evidence="1">
    <location>
        <begin position="14"/>
        <end position="30"/>
    </location>
</feature>
<feature type="binding site" description="axial binding residue" evidence="1">
    <location>
        <position position="18"/>
    </location>
    <ligand>
        <name>heme</name>
        <dbReference type="ChEBI" id="CHEBI:30413"/>
        <note>ligand shared with alpha subunit</note>
    </ligand>
    <ligandPart>
        <name>Fe</name>
        <dbReference type="ChEBI" id="CHEBI:18248"/>
    </ligandPart>
</feature>
<reference key="1">
    <citation type="journal article" date="2006" name="Mol. Biol. Evol.">
        <title>The complete chloroplast genome sequence of Pelargonium x hortorum: organization and evolution of the largest and most highly rearranged chloroplast genome of land plants.</title>
        <authorList>
            <person name="Chumley T.W."/>
            <person name="Palmer J.D."/>
            <person name="Mower J.P."/>
            <person name="Fourcade H.M."/>
            <person name="Calie P.J."/>
            <person name="Boore J.L."/>
            <person name="Jansen R.K."/>
        </authorList>
    </citation>
    <scope>NUCLEOTIDE SEQUENCE [LARGE SCALE GENOMIC DNA]</scope>
    <source>
        <strain>cv. Ringo White</strain>
    </source>
</reference>
<protein>
    <recommendedName>
        <fullName evidence="1">Cytochrome b559 subunit beta</fullName>
    </recommendedName>
    <alternativeName>
        <fullName evidence="1">PSII reaction center subunit VI</fullName>
    </alternativeName>
</protein>
<evidence type="ECO:0000255" key="1">
    <source>
        <dbReference type="HAMAP-Rule" id="MF_00643"/>
    </source>
</evidence>
<gene>
    <name evidence="1" type="primary">psbF</name>
</gene>